<reference key="1">
    <citation type="journal article" date="2003" name="Plant Mol. Biol.">
        <title>Cloning and characterization of the durable tomato mosaic virus resistance gene Tm-2(2) from Lycopersicon esculentum.</title>
        <authorList>
            <person name="Lanfermeijer F.C."/>
            <person name="Dijkhuis J."/>
            <person name="Sturre M.J.G."/>
            <person name="de Haan P."/>
            <person name="Hille J."/>
        </authorList>
    </citation>
    <scope>NUCLEOTIDE SEQUENCE [GENOMIC DNA]</scope>
    <scope>FUNCTION</scope>
    <source>
        <strain>cv. ATV840</strain>
        <strain>cv. Craigella GCR26</strain>
        <strain>cv. Stevens</strain>
    </source>
</reference>
<reference key="2">
    <citation type="journal article" date="2012" name="Nature">
        <title>The tomato genome sequence provides insights into fleshy fruit evolution.</title>
        <authorList>
            <consortium name="Tomato Genome Consortium"/>
        </authorList>
    </citation>
    <scope>NUCLEOTIDE SEQUENCE [LARGE SCALE GENOMIC DNA]</scope>
    <source>
        <strain>cv. Heinz 1706</strain>
    </source>
</reference>
<reference key="3">
    <citation type="submission" date="2004-09" db="EMBL/GenBank/DDBJ databases">
        <authorList>
            <person name="Lanfermeijer F.C."/>
            <person name="ten Hoopen F."/>
            <person name="Hille J."/>
        </authorList>
    </citation>
    <scope>NUCLEOTIDE SEQUENCE [GENOMIC DNA] OF 1-17</scope>
    <source>
        <strain>cv. ATV840</strain>
    </source>
</reference>
<reference key="4">
    <citation type="submission" date="2009-03" db="EMBL/GenBank/DDBJ databases">
        <title>Development of SNP markers for disease resistance genes in tomato.</title>
        <authorList>
            <person name="Shi A."/>
            <person name="Vierling R."/>
            <person name="Grazzini R."/>
            <person name="Hogue P."/>
            <person name="Miller K."/>
        </authorList>
    </citation>
    <scope>NUCLEOTIDE SEQUENCE [GENOMIC DNA] OF 228-423 AND 594-827</scope>
    <source>
        <strain>cv. Anahu LA0655</strain>
        <strain>cv. LA0656</strain>
        <strain>cv. Peto 95-43 LA3528</strain>
    </source>
</reference>
<reference key="5">
    <citation type="journal article" date="1989" name="Plant Cell">
        <title>Mutations in the tobacco mosaic virus 30-kD protein gene overcome Tm-2 resistance in tomato.</title>
        <authorList>
            <person name="Meshi T."/>
            <person name="Motoyoshi F."/>
            <person name="Maeda T."/>
            <person name="Yoshiwoka S."/>
            <person name="Watanabe H."/>
            <person name="Okada Y."/>
        </authorList>
    </citation>
    <scope>FUNCTION</scope>
    <source>
        <strain>cv. Craigella GCR26</strain>
    </source>
</reference>
<reference key="6">
    <citation type="journal article" date="1995" name="Theor. Appl. Genet.">
        <title>Identification of RAPD markers linked to the Tm-2 locus in tomato.</title>
        <authorList>
            <person name="Ohmori T."/>
            <person name="Murata M."/>
            <person name="Motoyoshi F."/>
        </authorList>
    </citation>
    <scope>GENE FAMILY</scope>
    <source>
        <strain>cv. Craigella GCR26</strain>
    </source>
</reference>
<reference key="7">
    <citation type="journal article" date="1998" name="Mol. Plant Microbe Interact.">
        <title>Tm-2(2) resistance in tomato requires recognition of the carboxy terminus of the movement protein of tomato mosaic virus.</title>
        <authorList>
            <person name="Weber H."/>
            <person name="Pfitzner A.J.P."/>
        </authorList>
    </citation>
    <scope>FUNCTION</scope>
    <source>
        <strain>cv. Craigella GCR26</strain>
    </source>
</reference>
<reference key="8">
    <citation type="journal article" date="2004" name="Arch. Virol.">
        <title>The Tomato mosaic virus 30 kDa movement protein interacts differentially with the resistance genes Tm-2 and Tm-2(2).</title>
        <authorList>
            <person name="Weber H."/>
            <person name="Ohnesorge S."/>
            <person name="Silber M.V."/>
            <person name="Pfitzner A.J.P."/>
        </authorList>
    </citation>
    <scope>FUNCTION</scope>
    <source>
        <strain>cv. Craigella GCR26</strain>
    </source>
</reference>
<reference key="9">
    <citation type="journal article" date="2005" name="J. Exp. Bot.">
        <title>The products of the broken Tm-2 and the durable Tm-2(2) resistance genes from tomato differ in four amino acids.</title>
        <authorList>
            <person name="Lanfermeijer F.C."/>
            <person name="Warmink J."/>
            <person name="Hille J."/>
        </authorList>
    </citation>
    <scope>FUNCTION</scope>
    <scope>GENE FAMILY</scope>
    <source>
        <strain>cv. Craigella GCR26</strain>
    </source>
</reference>
<reference key="10">
    <citation type="journal article" date="2017" name="Plant Pathol. J.">
        <title>Experimental infection of different tomato genotypes with tomato mosaic virus led to a low viral population heterogeneity in the capsid protein encoding region.</title>
        <authorList>
            <person name="Sihelska N."/>
            <person name="Vozarova Z."/>
            <person name="Predajna L."/>
            <person name="Soltys K."/>
            <person name="Hudcovicova M."/>
            <person name="Mihalik D."/>
            <person name="Kraic J."/>
            <person name="Mrkvova M."/>
            <person name="Kudela O."/>
            <person name="Glasa M."/>
        </authorList>
    </citation>
    <scope>FUNCTION</scope>
    <source>
        <strain>cv. Monalbo</strain>
    </source>
</reference>
<reference key="11">
    <citation type="journal article" date="2017" name="Plant Physiol.">
        <title>Antiviral resistance protein Tm-2(2) functions on the plasma membrane.</title>
        <authorList>
            <person name="Chen T."/>
            <person name="Liu D."/>
            <person name="Niu X."/>
            <person name="Wang J."/>
            <person name="Qian L."/>
            <person name="Han L."/>
            <person name="Liu N."/>
            <person name="Zhao J."/>
            <person name="Hong Y."/>
            <person name="Liu Y."/>
        </authorList>
    </citation>
    <scope>INTERACTION WITH TOBACCO MOSAIC VIRUS MOUVEMENT PROTEIN (MICROBIAL INFECTION)</scope>
</reference>
<evidence type="ECO:0000250" key="1">
    <source>
        <dbReference type="UniProtKB" id="Q71BG9"/>
    </source>
</evidence>
<evidence type="ECO:0000255" key="2"/>
<evidence type="ECO:0000269" key="3">
    <source>
    </source>
</evidence>
<evidence type="ECO:0000269" key="4">
    <source>
    </source>
</evidence>
<evidence type="ECO:0000269" key="5">
    <source>
    </source>
</evidence>
<evidence type="ECO:0000269" key="6">
    <source>
    </source>
</evidence>
<evidence type="ECO:0000269" key="7">
    <source>
    </source>
</evidence>
<evidence type="ECO:0000269" key="8">
    <source>
    </source>
</evidence>
<evidence type="ECO:0000269" key="9">
    <source>
    </source>
</evidence>
<evidence type="ECO:0000303" key="10">
    <source>
    </source>
</evidence>
<evidence type="ECO:0000303" key="11">
    <source ref="3"/>
</evidence>
<evidence type="ECO:0000303" key="12">
    <source ref="4"/>
</evidence>
<evidence type="ECO:0000305" key="13"/>
<feature type="chain" id="PRO_0000448718" description="ToMV susceptible protein tm-2">
    <location>
        <begin position="1"/>
        <end position="861"/>
    </location>
</feature>
<feature type="domain" description="NB-ARC" evidence="2">
    <location>
        <begin position="162"/>
        <end position="388"/>
    </location>
</feature>
<feature type="repeat" description="LRR 1" evidence="2">
    <location>
        <begin position="225"/>
        <end position="248"/>
    </location>
</feature>
<feature type="repeat" description="LRR 2" evidence="2">
    <location>
        <begin position="305"/>
        <end position="327"/>
    </location>
</feature>
<feature type="repeat" description="LRR 3" evidence="2">
    <location>
        <begin position="388"/>
        <end position="411"/>
    </location>
</feature>
<feature type="repeat" description="LRR 4" evidence="2">
    <location>
        <begin position="449"/>
        <end position="472"/>
    </location>
</feature>
<feature type="repeat" description="LRR 5" evidence="2">
    <location>
        <begin position="510"/>
        <end position="536"/>
    </location>
</feature>
<feature type="repeat" description="LRR 6" evidence="2">
    <location>
        <begin position="585"/>
        <end position="608"/>
    </location>
</feature>
<feature type="repeat" description="LRR 7" evidence="2">
    <location>
        <begin position="609"/>
        <end position="631"/>
    </location>
</feature>
<feature type="repeat" description="LRR 8" evidence="2">
    <location>
        <begin position="652"/>
        <end position="680"/>
    </location>
</feature>
<feature type="repeat" description="LRR 9" evidence="2">
    <location>
        <begin position="689"/>
        <end position="713"/>
    </location>
</feature>
<feature type="repeat" description="LRR 10" evidence="2">
    <location>
        <begin position="735"/>
        <end position="758"/>
    </location>
</feature>
<feature type="repeat" description="LRR 11" evidence="2">
    <location>
        <begin position="781"/>
        <end position="804"/>
    </location>
</feature>
<feature type="repeat" description="LRR 12" evidence="2">
    <location>
        <begin position="810"/>
        <end position="835"/>
    </location>
</feature>
<feature type="coiled-coil region" evidence="2">
    <location>
        <begin position="63"/>
        <end position="83"/>
    </location>
</feature>
<feature type="binding site" evidence="2">
    <location>
        <begin position="185"/>
        <end position="192"/>
    </location>
    <ligand>
        <name>ATP</name>
        <dbReference type="ChEBI" id="CHEBI:30616"/>
    </ligand>
</feature>
<dbReference type="EMBL" id="AF536199">
    <property type="protein sequence ID" value="AAQ10734.1"/>
    <property type="molecule type" value="Genomic_DNA"/>
</dbReference>
<dbReference type="EMBL" id="CM001072">
    <property type="status" value="NOT_ANNOTATED_CDS"/>
    <property type="molecule type" value="Genomic_DNA"/>
</dbReference>
<dbReference type="EMBL" id="AY765396">
    <property type="protein sequence ID" value="AAV39530.1"/>
    <property type="molecule type" value="Genomic_DNA"/>
</dbReference>
<dbReference type="EMBL" id="FJ817595">
    <property type="protein sequence ID" value="ACO52368.1"/>
    <property type="molecule type" value="Genomic_DNA"/>
</dbReference>
<dbReference type="EMBL" id="FJ817596">
    <property type="protein sequence ID" value="ACO52369.1"/>
    <property type="molecule type" value="Genomic_DNA"/>
</dbReference>
<dbReference type="EMBL" id="FJ817599">
    <property type="protein sequence ID" value="ACO52372.1"/>
    <property type="molecule type" value="Genomic_DNA"/>
</dbReference>
<dbReference type="EMBL" id="FJ817600">
    <property type="protein sequence ID" value="ACO52373.1"/>
    <property type="molecule type" value="Genomic_DNA"/>
</dbReference>
<dbReference type="EMBL" id="FJ817601">
    <property type="protein sequence ID" value="ACO52374.1"/>
    <property type="molecule type" value="Genomic_DNA"/>
</dbReference>
<dbReference type="EMBL" id="FJ817607">
    <property type="protein sequence ID" value="ACO52380.1"/>
    <property type="molecule type" value="Genomic_DNA"/>
</dbReference>
<dbReference type="RefSeq" id="NP_001318061.1">
    <property type="nucleotide sequence ID" value="NM_001331132.1"/>
</dbReference>
<dbReference type="SMR" id="Q71BH1"/>
<dbReference type="STRING" id="4081.Q71BH1"/>
<dbReference type="PaxDb" id="4081-Solyc09g018220.1.1"/>
<dbReference type="GeneID" id="101255420"/>
<dbReference type="KEGG" id="sly:101255420"/>
<dbReference type="eggNOG" id="KOG4658">
    <property type="taxonomic scope" value="Eukaryota"/>
</dbReference>
<dbReference type="HOGENOM" id="CLU_000837_25_4_1"/>
<dbReference type="InParanoid" id="Q71BH1"/>
<dbReference type="OrthoDB" id="3429988at2759"/>
<dbReference type="PhylomeDB" id="Q71BH1"/>
<dbReference type="Proteomes" id="UP000004994">
    <property type="component" value="Unplaced"/>
</dbReference>
<dbReference type="ExpressionAtlas" id="Q71BH1">
    <property type="expression patterns" value="baseline and differential"/>
</dbReference>
<dbReference type="GO" id="GO:0005886">
    <property type="term" value="C:plasma membrane"/>
    <property type="evidence" value="ECO:0000250"/>
    <property type="project" value="UniProtKB"/>
</dbReference>
<dbReference type="GO" id="GO:0043531">
    <property type="term" value="F:ADP binding"/>
    <property type="evidence" value="ECO:0007669"/>
    <property type="project" value="InterPro"/>
</dbReference>
<dbReference type="GO" id="GO:0005524">
    <property type="term" value="F:ATP binding"/>
    <property type="evidence" value="ECO:0007669"/>
    <property type="project" value="UniProtKB-KW"/>
</dbReference>
<dbReference type="GO" id="GO:0016887">
    <property type="term" value="F:ATP hydrolysis activity"/>
    <property type="evidence" value="ECO:0007669"/>
    <property type="project" value="InterPro"/>
</dbReference>
<dbReference type="GO" id="GO:0098542">
    <property type="term" value="P:defense response to other organism"/>
    <property type="evidence" value="ECO:0000318"/>
    <property type="project" value="GO_Central"/>
</dbReference>
<dbReference type="CDD" id="cd14798">
    <property type="entry name" value="RX-CC_like"/>
    <property type="match status" value="1"/>
</dbReference>
<dbReference type="FunFam" id="3.40.50.300:FF:001091">
    <property type="entry name" value="Probable disease resistance protein At1g61300"/>
    <property type="match status" value="1"/>
</dbReference>
<dbReference type="FunFam" id="1.10.10.10:FF:000322">
    <property type="entry name" value="Probable disease resistance protein At1g63360"/>
    <property type="match status" value="1"/>
</dbReference>
<dbReference type="Gene3D" id="1.20.5.4130">
    <property type="match status" value="1"/>
</dbReference>
<dbReference type="Gene3D" id="1.10.8.430">
    <property type="entry name" value="Helical domain of apoptotic protease-activating factors"/>
    <property type="match status" value="1"/>
</dbReference>
<dbReference type="Gene3D" id="3.40.50.300">
    <property type="entry name" value="P-loop containing nucleotide triphosphate hydrolases"/>
    <property type="match status" value="1"/>
</dbReference>
<dbReference type="Gene3D" id="3.80.10.10">
    <property type="entry name" value="Ribonuclease Inhibitor"/>
    <property type="match status" value="1"/>
</dbReference>
<dbReference type="Gene3D" id="1.10.10.10">
    <property type="entry name" value="Winged helix-like DNA-binding domain superfamily/Winged helix DNA-binding domain"/>
    <property type="match status" value="1"/>
</dbReference>
<dbReference type="InterPro" id="IPR003593">
    <property type="entry name" value="AAA+_ATPase"/>
</dbReference>
<dbReference type="InterPro" id="IPR042197">
    <property type="entry name" value="Apaf_helical"/>
</dbReference>
<dbReference type="InterPro" id="IPR044974">
    <property type="entry name" value="Disease_R_plants"/>
</dbReference>
<dbReference type="InterPro" id="IPR032675">
    <property type="entry name" value="LRR_dom_sf"/>
</dbReference>
<dbReference type="InterPro" id="IPR055414">
    <property type="entry name" value="LRR_R13L4/SHOC2-like"/>
</dbReference>
<dbReference type="InterPro" id="IPR002182">
    <property type="entry name" value="NB-ARC"/>
</dbReference>
<dbReference type="InterPro" id="IPR027417">
    <property type="entry name" value="P-loop_NTPase"/>
</dbReference>
<dbReference type="InterPro" id="IPR038005">
    <property type="entry name" value="RX-like_CC"/>
</dbReference>
<dbReference type="InterPro" id="IPR041118">
    <property type="entry name" value="Rx_N"/>
</dbReference>
<dbReference type="InterPro" id="IPR036388">
    <property type="entry name" value="WH-like_DNA-bd_sf"/>
</dbReference>
<dbReference type="PANTHER" id="PTHR23155">
    <property type="entry name" value="DISEASE RESISTANCE PROTEIN RP"/>
    <property type="match status" value="1"/>
</dbReference>
<dbReference type="PANTHER" id="PTHR23155:SF1238">
    <property type="entry name" value="TOMV SUSCEPTIBLE PROTEIN TM-2"/>
    <property type="match status" value="1"/>
</dbReference>
<dbReference type="Pfam" id="PF23598">
    <property type="entry name" value="LRR_14"/>
    <property type="match status" value="1"/>
</dbReference>
<dbReference type="Pfam" id="PF00931">
    <property type="entry name" value="NB-ARC"/>
    <property type="match status" value="1"/>
</dbReference>
<dbReference type="Pfam" id="PF18052">
    <property type="entry name" value="Rx_N"/>
    <property type="match status" value="1"/>
</dbReference>
<dbReference type="Pfam" id="PF23559">
    <property type="entry name" value="WH_DRP"/>
    <property type="match status" value="1"/>
</dbReference>
<dbReference type="PRINTS" id="PR00364">
    <property type="entry name" value="DISEASERSIST"/>
</dbReference>
<dbReference type="SMART" id="SM00382">
    <property type="entry name" value="AAA"/>
    <property type="match status" value="1"/>
</dbReference>
<dbReference type="SUPFAM" id="SSF52058">
    <property type="entry name" value="L domain-like"/>
    <property type="match status" value="1"/>
</dbReference>
<dbReference type="SUPFAM" id="SSF52540">
    <property type="entry name" value="P-loop containing nucleoside triphosphate hydrolases"/>
    <property type="match status" value="1"/>
</dbReference>
<organism>
    <name type="scientific">Solanum lycopersicum</name>
    <name type="common">Tomato</name>
    <name type="synonym">Lycopersicon esculentum</name>
    <dbReference type="NCBI Taxonomy" id="4081"/>
    <lineage>
        <taxon>Eukaryota</taxon>
        <taxon>Viridiplantae</taxon>
        <taxon>Streptophyta</taxon>
        <taxon>Embryophyta</taxon>
        <taxon>Tracheophyta</taxon>
        <taxon>Spermatophyta</taxon>
        <taxon>Magnoliopsida</taxon>
        <taxon>eudicotyledons</taxon>
        <taxon>Gunneridae</taxon>
        <taxon>Pentapetalae</taxon>
        <taxon>asterids</taxon>
        <taxon>lamiids</taxon>
        <taxon>Solanales</taxon>
        <taxon>Solanaceae</taxon>
        <taxon>Solanoideae</taxon>
        <taxon>Solaneae</taxon>
        <taxon>Solanum</taxon>
        <taxon>Solanum subgen. Lycopersicon</taxon>
    </lineage>
</organism>
<sequence>MAEILLTSVINKSVEIAGNLLIQEGKRLYWLKEDIDWLQREMRHIRSYVDNAKAKEAGGDSRVKNLLKDIQELAGDVEDLLDDFLPKIQRSNKFNYCLKTSSFADEFAMEIEKIKRRVVDIDRIRKTYNIIDTDNNNDDCVLLDRRRLFLHADETEIIGLDDDFNMLQAKLLNQDLHYGVVSIVGMPGLGKTTLAKKLYRLIRDQFECSGLVYVSQQPRAGEILLDIAKQIGLTEQKIKENLEDNLRSLLKIKRYVILLDDIWDVEIWDDLKLVLPECDSKVGSRMIITSRNSNVGRYIGGESSLHALQPLESEKSFELFTKKIFNFDDNNSWANASPDLVNIGRNIAGRCGGIPLAIVVTAGMLRARERTEHAWNRVLESMGHKVQDGCAKVLALSYNDLPIASRPCFLYFSLYPEDHEIRAFDLINMWIAEKFIVVNSGNRREAEDLAEDVLNDLVSRNLIQLAKRTYNGRISSCRIHDLLHSLCVDLAKESNFFHTAHDVFGDPGNVARLRRITFYSDNVMIEFFGSNPKLEKLRVLFCFTKDPSIFSHMACFDFKLLHTLVVVMSQSFQAYVTIPSKFGNMTCLRYLKLEGNICGKLPNSIVKLTRLETIDIDRRSLIQLPSGVWESKHLRHLCYRDYGQACNSCFSISSFYPNIYSLHPNNLQTLMWIPDKFFEPRLLHRLINLRKLGILGVSNSTVKILSTCRPVPKALKVLKLRFFSDPSEQINLSSYPKIVKLHLNVDRTIALNSEAFPPNIIKLTLVCFMVDSCLLAVLKTLPKLRKLKMVICKYNEEKMALSGEANGYSFPQLEVLHIHSPNGLSEVTCTDDVSMPKLKKLLLTGFHCGISLSERLKKLSK</sequence>
<name>TM2S_SOLLC</name>
<gene>
    <name evidence="10 11" type="primary">tm-2</name>
    <name evidence="13" type="ordered locus">Solyc09g018220</name>
</gene>
<protein>
    <recommendedName>
        <fullName evidence="10">ToMV susceptible protein tm-2</fullName>
    </recommendedName>
    <alternativeName>
        <fullName evidence="12">Disease susceptible protein tm-2</fullName>
    </alternativeName>
</protein>
<comment type="function">
    <text evidence="3 4 5 6 8 9">Potential inhibitor of viral mouvements which may confer resistance to some tobamoviruses but not to the tomato mosaic virus (ToMV) and tobacco mosaic virus (TMV).</text>
</comment>
<comment type="subunit">
    <text evidence="7">(Microbial infection) Fails to interact with the tobamovirus mouvement protein of tobacco mosaic virus (TMV).</text>
</comment>
<comment type="subcellular location">
    <subcellularLocation>
        <location evidence="1">Cell membrane</location>
        <topology evidence="1">Peripheral membrane protein</topology>
        <orientation evidence="1">Cytoplasmic side</orientation>
    </subcellularLocation>
</comment>
<comment type="miscellaneous">
    <text evidence="3">The Tm-2, Tm-2(2) and Tm-2nv alleles present in the tomato mosaic virus (ToMV/TMV)-resistant tomato cv. Craigella isolates GCR236 (AC Q71BH0), cv. Craigella GCR267 (AC Q71BG9) and cv. Yukang 2 (AC Q5MLE9), respectively confers resistance to ToMV but not the tm-2 allele present in the ToMV-susceptible tomato cv. Craigella isolate GCR26 (AC Q71BH1).</text>
</comment>
<comment type="similarity">
    <text evidence="13">Belongs to the disease resistance NB-LRR family.</text>
</comment>
<accession>Q71BH1</accession>
<accession>A0A3Q7I1U1</accession>
<accession>C3UZH5</accession>
<accession>C3UZI0</accession>
<accession>Q5UB82</accession>
<proteinExistence type="evidence at protein level"/>
<keyword id="KW-0067">ATP-binding</keyword>
<keyword id="KW-1003">Cell membrane</keyword>
<keyword id="KW-0175">Coiled coil</keyword>
<keyword id="KW-0433">Leucine-rich repeat</keyword>
<keyword id="KW-0472">Membrane</keyword>
<keyword id="KW-0547">Nucleotide-binding</keyword>
<keyword id="KW-0611">Plant defense</keyword>
<keyword id="KW-1185">Reference proteome</keyword>
<keyword id="KW-0677">Repeat</keyword>